<protein>
    <recommendedName>
        <fullName evidence="1">Xanthine-guanine phosphoribosyltransferase</fullName>
        <shortName evidence="1">XGPRT</shortName>
        <ecNumber evidence="1">2.4.2.-</ecNumber>
        <ecNumber evidence="1">2.4.2.22</ecNumber>
    </recommendedName>
    <alternativeName>
        <fullName evidence="1">Xanthine phosphoribosyltransferase</fullName>
    </alternativeName>
</protein>
<dbReference type="EC" id="2.4.2.-" evidence="1"/>
<dbReference type="EC" id="2.4.2.22" evidence="1"/>
<dbReference type="EMBL" id="CP000946">
    <property type="protein sequence ID" value="ACA78964.1"/>
    <property type="molecule type" value="Genomic_DNA"/>
</dbReference>
<dbReference type="RefSeq" id="WP_001291990.1">
    <property type="nucleotide sequence ID" value="NZ_MTFT01000010.1"/>
</dbReference>
<dbReference type="SMR" id="B1J0Z6"/>
<dbReference type="GeneID" id="93777155"/>
<dbReference type="KEGG" id="ecl:EcolC_3343"/>
<dbReference type="HOGENOM" id="CLU_080904_3_0_6"/>
<dbReference type="UniPathway" id="UPA00602">
    <property type="reaction ID" value="UER00658"/>
</dbReference>
<dbReference type="UniPathway" id="UPA00909">
    <property type="reaction ID" value="UER00887"/>
</dbReference>
<dbReference type="GO" id="GO:0005829">
    <property type="term" value="C:cytosol"/>
    <property type="evidence" value="ECO:0007669"/>
    <property type="project" value="TreeGrafter"/>
</dbReference>
<dbReference type="GO" id="GO:0005886">
    <property type="term" value="C:plasma membrane"/>
    <property type="evidence" value="ECO:0007669"/>
    <property type="project" value="UniProtKB-SubCell"/>
</dbReference>
<dbReference type="GO" id="GO:0052657">
    <property type="term" value="F:guanine phosphoribosyltransferase activity"/>
    <property type="evidence" value="ECO:0007669"/>
    <property type="project" value="RHEA"/>
</dbReference>
<dbReference type="GO" id="GO:0004422">
    <property type="term" value="F:hypoxanthine phosphoribosyltransferase activity"/>
    <property type="evidence" value="ECO:0007669"/>
    <property type="project" value="TreeGrafter"/>
</dbReference>
<dbReference type="GO" id="GO:0000287">
    <property type="term" value="F:magnesium ion binding"/>
    <property type="evidence" value="ECO:0007669"/>
    <property type="project" value="UniProtKB-UniRule"/>
</dbReference>
<dbReference type="GO" id="GO:0000310">
    <property type="term" value="F:xanthine phosphoribosyltransferase activity"/>
    <property type="evidence" value="ECO:0007669"/>
    <property type="project" value="UniProtKB-UniRule"/>
</dbReference>
<dbReference type="GO" id="GO:0032263">
    <property type="term" value="P:GMP salvage"/>
    <property type="evidence" value="ECO:0007669"/>
    <property type="project" value="UniProtKB-UniRule"/>
</dbReference>
<dbReference type="GO" id="GO:0032264">
    <property type="term" value="P:IMP salvage"/>
    <property type="evidence" value="ECO:0007669"/>
    <property type="project" value="TreeGrafter"/>
</dbReference>
<dbReference type="GO" id="GO:0006166">
    <property type="term" value="P:purine ribonucleoside salvage"/>
    <property type="evidence" value="ECO:0007669"/>
    <property type="project" value="UniProtKB-KW"/>
</dbReference>
<dbReference type="GO" id="GO:0032265">
    <property type="term" value="P:XMP salvage"/>
    <property type="evidence" value="ECO:0007669"/>
    <property type="project" value="UniProtKB-UniRule"/>
</dbReference>
<dbReference type="CDD" id="cd06223">
    <property type="entry name" value="PRTases_typeI"/>
    <property type="match status" value="1"/>
</dbReference>
<dbReference type="FunFam" id="3.40.50.2020:FF:000009">
    <property type="entry name" value="Xanthine phosphoribosyltransferase"/>
    <property type="match status" value="1"/>
</dbReference>
<dbReference type="Gene3D" id="3.40.50.2020">
    <property type="match status" value="1"/>
</dbReference>
<dbReference type="HAMAP" id="MF_01903">
    <property type="entry name" value="XGPRT"/>
    <property type="match status" value="1"/>
</dbReference>
<dbReference type="InterPro" id="IPR000836">
    <property type="entry name" value="PRibTrfase_dom"/>
</dbReference>
<dbReference type="InterPro" id="IPR029057">
    <property type="entry name" value="PRTase-like"/>
</dbReference>
<dbReference type="InterPro" id="IPR023747">
    <property type="entry name" value="Xanthine_Guanine_PRibTrfase"/>
</dbReference>
<dbReference type="NCBIfam" id="NF006613">
    <property type="entry name" value="PRK09177.1"/>
    <property type="match status" value="1"/>
</dbReference>
<dbReference type="PANTHER" id="PTHR39563">
    <property type="entry name" value="XANTHINE PHOSPHORIBOSYLTRANSFERASE"/>
    <property type="match status" value="1"/>
</dbReference>
<dbReference type="PANTHER" id="PTHR39563:SF1">
    <property type="entry name" value="XANTHINE-GUANINE PHOSPHORIBOSYLTRANSFERASE"/>
    <property type="match status" value="1"/>
</dbReference>
<dbReference type="Pfam" id="PF00156">
    <property type="entry name" value="Pribosyltran"/>
    <property type="match status" value="1"/>
</dbReference>
<dbReference type="SUPFAM" id="SSF53271">
    <property type="entry name" value="PRTase-like"/>
    <property type="match status" value="1"/>
</dbReference>
<dbReference type="PROSITE" id="PS00103">
    <property type="entry name" value="PUR_PYR_PR_TRANSFER"/>
    <property type="match status" value="1"/>
</dbReference>
<keyword id="KW-0997">Cell inner membrane</keyword>
<keyword id="KW-1003">Cell membrane</keyword>
<keyword id="KW-0328">Glycosyltransferase</keyword>
<keyword id="KW-0460">Magnesium</keyword>
<keyword id="KW-0472">Membrane</keyword>
<keyword id="KW-0479">Metal-binding</keyword>
<keyword id="KW-0660">Purine salvage</keyword>
<keyword id="KW-0808">Transferase</keyword>
<feature type="chain" id="PRO_1000088473" description="Xanthine-guanine phosphoribosyltransferase">
    <location>
        <begin position="1"/>
        <end position="152"/>
    </location>
</feature>
<feature type="binding site" evidence="1">
    <location>
        <begin position="37"/>
        <end position="38"/>
    </location>
    <ligand>
        <name>5-phospho-alpha-D-ribose 1-diphosphate</name>
        <dbReference type="ChEBI" id="CHEBI:58017"/>
    </ligand>
</feature>
<feature type="binding site" evidence="1">
    <location>
        <position position="69"/>
    </location>
    <ligand>
        <name>5-phospho-alpha-D-ribose 1-diphosphate</name>
        <dbReference type="ChEBI" id="CHEBI:58017"/>
    </ligand>
</feature>
<feature type="binding site" evidence="1">
    <location>
        <position position="69"/>
    </location>
    <ligand>
        <name>GMP</name>
        <dbReference type="ChEBI" id="CHEBI:58115"/>
    </ligand>
</feature>
<feature type="binding site" evidence="1">
    <location>
        <begin position="88"/>
        <end position="96"/>
    </location>
    <ligand>
        <name>5-phospho-alpha-D-ribose 1-diphosphate</name>
        <dbReference type="ChEBI" id="CHEBI:58017"/>
    </ligand>
</feature>
<feature type="binding site" evidence="1">
    <location>
        <position position="89"/>
    </location>
    <ligand>
        <name>Mg(2+)</name>
        <dbReference type="ChEBI" id="CHEBI:18420"/>
    </ligand>
</feature>
<feature type="binding site" evidence="1">
    <location>
        <begin position="92"/>
        <end position="96"/>
    </location>
    <ligand>
        <name>GMP</name>
        <dbReference type="ChEBI" id="CHEBI:58115"/>
    </ligand>
</feature>
<feature type="binding site" evidence="1">
    <location>
        <position position="92"/>
    </location>
    <ligand>
        <name>guanine</name>
        <dbReference type="ChEBI" id="CHEBI:16235"/>
    </ligand>
</feature>
<feature type="binding site" evidence="1">
    <location>
        <position position="92"/>
    </location>
    <ligand>
        <name>xanthine</name>
        <dbReference type="ChEBI" id="CHEBI:17712"/>
    </ligand>
</feature>
<feature type="binding site" evidence="1">
    <location>
        <begin position="134"/>
        <end position="135"/>
    </location>
    <ligand>
        <name>GMP</name>
        <dbReference type="ChEBI" id="CHEBI:58115"/>
    </ligand>
</feature>
<feature type="binding site" evidence="1">
    <location>
        <position position="135"/>
    </location>
    <ligand>
        <name>guanine</name>
        <dbReference type="ChEBI" id="CHEBI:16235"/>
    </ligand>
</feature>
<feature type="binding site" evidence="1">
    <location>
        <position position="135"/>
    </location>
    <ligand>
        <name>xanthine</name>
        <dbReference type="ChEBI" id="CHEBI:17712"/>
    </ligand>
</feature>
<reference key="1">
    <citation type="submission" date="2008-02" db="EMBL/GenBank/DDBJ databases">
        <title>Complete sequence of Escherichia coli C str. ATCC 8739.</title>
        <authorList>
            <person name="Copeland A."/>
            <person name="Lucas S."/>
            <person name="Lapidus A."/>
            <person name="Glavina del Rio T."/>
            <person name="Dalin E."/>
            <person name="Tice H."/>
            <person name="Bruce D."/>
            <person name="Goodwin L."/>
            <person name="Pitluck S."/>
            <person name="Kiss H."/>
            <person name="Brettin T."/>
            <person name="Detter J.C."/>
            <person name="Han C."/>
            <person name="Kuske C.R."/>
            <person name="Schmutz J."/>
            <person name="Larimer F."/>
            <person name="Land M."/>
            <person name="Hauser L."/>
            <person name="Kyrpides N."/>
            <person name="Mikhailova N."/>
            <person name="Ingram L."/>
            <person name="Richardson P."/>
        </authorList>
    </citation>
    <scope>NUCLEOTIDE SEQUENCE [LARGE SCALE GENOMIC DNA]</scope>
    <source>
        <strain>ATCC 8739 / DSM 1576 / NBRC 3972 / NCIMB 8545 / WDCM 00012 / Crooks</strain>
    </source>
</reference>
<name>XGPT_ECOLC</name>
<sequence>MSEKYIVTWDMLQIHARKLASRLMPSEQWKGIIAVSRGGLVPGALLARELGIRHVDTVCISSYDHDNQRELKVLKRAEGDGEGFIVIDDLVDTGGTAVAIREMYPKAHFVTIFAKPAGRPLVDDYVVDIPQDTWIEQPWDMGVVFVPPISGR</sequence>
<organism>
    <name type="scientific">Escherichia coli (strain ATCC 8739 / DSM 1576 / NBRC 3972 / NCIMB 8545 / WDCM 00012 / Crooks)</name>
    <dbReference type="NCBI Taxonomy" id="481805"/>
    <lineage>
        <taxon>Bacteria</taxon>
        <taxon>Pseudomonadati</taxon>
        <taxon>Pseudomonadota</taxon>
        <taxon>Gammaproteobacteria</taxon>
        <taxon>Enterobacterales</taxon>
        <taxon>Enterobacteriaceae</taxon>
        <taxon>Escherichia</taxon>
    </lineage>
</organism>
<gene>
    <name evidence="1" type="primary">gpt</name>
    <name type="ordered locus">EcolC_3343</name>
</gene>
<evidence type="ECO:0000255" key="1">
    <source>
        <dbReference type="HAMAP-Rule" id="MF_01903"/>
    </source>
</evidence>
<accession>B1J0Z6</accession>
<comment type="function">
    <text evidence="1">Purine salvage pathway enzyme that catalyzes the transfer of the ribosyl-5-phosphate group from 5-phospho-alpha-D-ribose 1-diphosphate (PRPP) to the N9 position of the 6-oxopurines guanine and xanthine to form the corresponding ribonucleotides GMP (guanosine 5'-monophosphate) and XMP (xanthosine 5'-monophosphate), with the release of PPi. To a lesser extent, also acts on hypoxanthine.</text>
</comment>
<comment type="catalytic activity">
    <reaction evidence="1">
        <text>GMP + diphosphate = guanine + 5-phospho-alpha-D-ribose 1-diphosphate</text>
        <dbReference type="Rhea" id="RHEA:25424"/>
        <dbReference type="ChEBI" id="CHEBI:16235"/>
        <dbReference type="ChEBI" id="CHEBI:33019"/>
        <dbReference type="ChEBI" id="CHEBI:58017"/>
        <dbReference type="ChEBI" id="CHEBI:58115"/>
    </reaction>
    <physiologicalReaction direction="right-to-left" evidence="1">
        <dbReference type="Rhea" id="RHEA:25426"/>
    </physiologicalReaction>
</comment>
<comment type="catalytic activity">
    <reaction evidence="1">
        <text>XMP + diphosphate = xanthine + 5-phospho-alpha-D-ribose 1-diphosphate</text>
        <dbReference type="Rhea" id="RHEA:10800"/>
        <dbReference type="ChEBI" id="CHEBI:17712"/>
        <dbReference type="ChEBI" id="CHEBI:33019"/>
        <dbReference type="ChEBI" id="CHEBI:57464"/>
        <dbReference type="ChEBI" id="CHEBI:58017"/>
        <dbReference type="EC" id="2.4.2.22"/>
    </reaction>
    <physiologicalReaction direction="right-to-left" evidence="1">
        <dbReference type="Rhea" id="RHEA:10802"/>
    </physiologicalReaction>
</comment>
<comment type="catalytic activity">
    <reaction evidence="1">
        <text>IMP + diphosphate = hypoxanthine + 5-phospho-alpha-D-ribose 1-diphosphate</text>
        <dbReference type="Rhea" id="RHEA:17973"/>
        <dbReference type="ChEBI" id="CHEBI:17368"/>
        <dbReference type="ChEBI" id="CHEBI:33019"/>
        <dbReference type="ChEBI" id="CHEBI:58017"/>
        <dbReference type="ChEBI" id="CHEBI:58053"/>
    </reaction>
    <physiologicalReaction direction="right-to-left" evidence="1">
        <dbReference type="Rhea" id="RHEA:17975"/>
    </physiologicalReaction>
</comment>
<comment type="cofactor">
    <cofactor evidence="1">
        <name>Mg(2+)</name>
        <dbReference type="ChEBI" id="CHEBI:18420"/>
    </cofactor>
</comment>
<comment type="pathway">
    <text evidence="1">Purine metabolism; GMP biosynthesis via salvage pathway; GMP from guanine: step 1/1.</text>
</comment>
<comment type="pathway">
    <text evidence="1">Purine metabolism; XMP biosynthesis via salvage pathway; XMP from xanthine: step 1/1.</text>
</comment>
<comment type="subunit">
    <text evidence="1">Homotetramer.</text>
</comment>
<comment type="subcellular location">
    <subcellularLocation>
        <location evidence="1">Cell inner membrane</location>
        <topology evidence="1">Peripheral membrane protein</topology>
    </subcellularLocation>
</comment>
<comment type="similarity">
    <text evidence="1">Belongs to the purine/pyrimidine phosphoribosyltransferase family. XGPT subfamily.</text>
</comment>
<proteinExistence type="inferred from homology"/>